<comment type="function">
    <text evidence="1">Alpha-L-arabinofuranosidase involved in the degradation of arabinoxylan, a major component of plant hemicellulose. Able to hydrolyze 1,5-, 1,3- and 1,2-alpha-linkages not only in L-arabinofuranosyl oligosaccharides, but also in polysaccharides containing terminal non-reducing L-arabinofuranoses in side chains, like L-arabinan, arabinogalactan and arabinoxylan (By similarity).</text>
</comment>
<comment type="catalytic activity">
    <reaction>
        <text>Hydrolysis of terminal non-reducing alpha-L-arabinofuranoside residues in alpha-L-arabinosides.</text>
        <dbReference type="EC" id="3.2.1.55"/>
    </reaction>
</comment>
<comment type="pathway">
    <text>Glycan metabolism; L-arabinan degradation.</text>
</comment>
<comment type="subcellular location">
    <subcellularLocation>
        <location evidence="1">Secreted</location>
    </subcellularLocation>
</comment>
<comment type="domain">
    <text evidence="1">Organized into two domains: an N-terminal catalytic domain and a C-terminal arabinose-binding domain (ABD).</text>
</comment>
<comment type="similarity">
    <text evidence="4">Belongs to the glycosyl hydrolase 54 family.</text>
</comment>
<proteinExistence type="inferred from homology"/>
<accession>Q4WL66</accession>
<keyword id="KW-0119">Carbohydrate metabolism</keyword>
<keyword id="KW-1015">Disulfide bond</keyword>
<keyword id="KW-0325">Glycoprotein</keyword>
<keyword id="KW-0326">Glycosidase</keyword>
<keyword id="KW-0378">Hydrolase</keyword>
<keyword id="KW-0624">Polysaccharide degradation</keyword>
<keyword id="KW-1185">Reference proteome</keyword>
<keyword id="KW-0964">Secreted</keyword>
<keyword id="KW-0732">Signal</keyword>
<keyword id="KW-0858">Xylan degradation</keyword>
<gene>
    <name type="primary">abfB</name>
    <name type="ORF">AFUA_6G14620</name>
</gene>
<reference key="1">
    <citation type="journal article" date="2005" name="Nature">
        <title>Genomic sequence of the pathogenic and allergenic filamentous fungus Aspergillus fumigatus.</title>
        <authorList>
            <person name="Nierman W.C."/>
            <person name="Pain A."/>
            <person name="Anderson M.J."/>
            <person name="Wortman J.R."/>
            <person name="Kim H.S."/>
            <person name="Arroyo J."/>
            <person name="Berriman M."/>
            <person name="Abe K."/>
            <person name="Archer D.B."/>
            <person name="Bermejo C."/>
            <person name="Bennett J.W."/>
            <person name="Bowyer P."/>
            <person name="Chen D."/>
            <person name="Collins M."/>
            <person name="Coulsen R."/>
            <person name="Davies R."/>
            <person name="Dyer P.S."/>
            <person name="Farman M.L."/>
            <person name="Fedorova N."/>
            <person name="Fedorova N.D."/>
            <person name="Feldblyum T.V."/>
            <person name="Fischer R."/>
            <person name="Fosker N."/>
            <person name="Fraser A."/>
            <person name="Garcia J.L."/>
            <person name="Garcia M.J."/>
            <person name="Goble A."/>
            <person name="Goldman G.H."/>
            <person name="Gomi K."/>
            <person name="Griffith-Jones S."/>
            <person name="Gwilliam R."/>
            <person name="Haas B.J."/>
            <person name="Haas H."/>
            <person name="Harris D.E."/>
            <person name="Horiuchi H."/>
            <person name="Huang J."/>
            <person name="Humphray S."/>
            <person name="Jimenez J."/>
            <person name="Keller N."/>
            <person name="Khouri H."/>
            <person name="Kitamoto K."/>
            <person name="Kobayashi T."/>
            <person name="Konzack S."/>
            <person name="Kulkarni R."/>
            <person name="Kumagai T."/>
            <person name="Lafton A."/>
            <person name="Latge J.-P."/>
            <person name="Li W."/>
            <person name="Lord A."/>
            <person name="Lu C."/>
            <person name="Majoros W.H."/>
            <person name="May G.S."/>
            <person name="Miller B.L."/>
            <person name="Mohamoud Y."/>
            <person name="Molina M."/>
            <person name="Monod M."/>
            <person name="Mouyna I."/>
            <person name="Mulligan S."/>
            <person name="Murphy L.D."/>
            <person name="O'Neil S."/>
            <person name="Paulsen I."/>
            <person name="Penalva M.A."/>
            <person name="Pertea M."/>
            <person name="Price C."/>
            <person name="Pritchard B.L."/>
            <person name="Quail M.A."/>
            <person name="Rabbinowitsch E."/>
            <person name="Rawlins N."/>
            <person name="Rajandream M.A."/>
            <person name="Reichard U."/>
            <person name="Renauld H."/>
            <person name="Robson G.D."/>
            <person name="Rodriguez de Cordoba S."/>
            <person name="Rodriguez-Pena J.M."/>
            <person name="Ronning C.M."/>
            <person name="Rutter S."/>
            <person name="Salzberg S.L."/>
            <person name="Sanchez M."/>
            <person name="Sanchez-Ferrero J.C."/>
            <person name="Saunders D."/>
            <person name="Seeger K."/>
            <person name="Squares R."/>
            <person name="Squares S."/>
            <person name="Takeuchi M."/>
            <person name="Tekaia F."/>
            <person name="Turner G."/>
            <person name="Vazquez de Aldana C.R."/>
            <person name="Weidman J."/>
            <person name="White O."/>
            <person name="Woodward J.R."/>
            <person name="Yu J.-H."/>
            <person name="Fraser C.M."/>
            <person name="Galagan J.E."/>
            <person name="Asai K."/>
            <person name="Machida M."/>
            <person name="Hall N."/>
            <person name="Barrell B.G."/>
            <person name="Denning D.W."/>
        </authorList>
    </citation>
    <scope>NUCLEOTIDE SEQUENCE [LARGE SCALE GENOMIC DNA]</scope>
    <source>
        <strain>ATCC MYA-4609 / CBS 101355 / FGSC A1100 / Af293</strain>
    </source>
</reference>
<organism>
    <name type="scientific">Aspergillus fumigatus (strain ATCC MYA-4609 / CBS 101355 / FGSC A1100 / Af293)</name>
    <name type="common">Neosartorya fumigata</name>
    <dbReference type="NCBI Taxonomy" id="330879"/>
    <lineage>
        <taxon>Eukaryota</taxon>
        <taxon>Fungi</taxon>
        <taxon>Dikarya</taxon>
        <taxon>Ascomycota</taxon>
        <taxon>Pezizomycotina</taxon>
        <taxon>Eurotiomycetes</taxon>
        <taxon>Eurotiomycetidae</taxon>
        <taxon>Eurotiales</taxon>
        <taxon>Aspergillaceae</taxon>
        <taxon>Aspergillus</taxon>
        <taxon>Aspergillus subgen. Fumigati</taxon>
    </lineage>
</organism>
<name>ABFB_ASPFU</name>
<evidence type="ECO:0000250" key="1"/>
<evidence type="ECO:0000250" key="2">
    <source>
        <dbReference type="UniProtKB" id="Q8NK89"/>
    </source>
</evidence>
<evidence type="ECO:0000255" key="3"/>
<evidence type="ECO:0000305" key="4"/>
<feature type="signal peptide" evidence="3">
    <location>
        <begin position="1"/>
        <end position="26"/>
    </location>
</feature>
<feature type="chain" id="PRO_0000394605" description="Probable alpha-L-arabinofuranosidase B">
    <location>
        <begin position="27"/>
        <end position="506"/>
    </location>
</feature>
<feature type="region of interest" description="Catalytic" evidence="1">
    <location>
        <begin position="27"/>
        <end position="343"/>
    </location>
</feature>
<feature type="region of interest" description="ABD" evidence="1">
    <location>
        <begin position="344"/>
        <end position="506"/>
    </location>
</feature>
<feature type="active site" description="Nucleophile" evidence="1">
    <location>
        <position position="229"/>
    </location>
</feature>
<feature type="active site" description="Proton donor" evidence="1">
    <location>
        <position position="305"/>
    </location>
</feature>
<feature type="binding site" evidence="2">
    <location>
        <position position="227"/>
    </location>
    <ligand>
        <name>substrate</name>
    </ligand>
</feature>
<feature type="binding site" evidence="2">
    <location>
        <position position="230"/>
    </location>
    <ligand>
        <name>substrate</name>
    </ligand>
</feature>
<feature type="binding site" evidence="2">
    <location>
        <position position="304"/>
    </location>
    <ligand>
        <name>substrate</name>
    </ligand>
</feature>
<feature type="binding site" evidence="2">
    <location>
        <position position="424"/>
    </location>
    <ligand>
        <name>substrate</name>
    </ligand>
</feature>
<feature type="binding site" evidence="2">
    <location>
        <position position="426"/>
    </location>
    <ligand>
        <name>substrate</name>
    </ligand>
</feature>
<feature type="binding site" evidence="2">
    <location>
        <position position="427"/>
    </location>
    <ligand>
        <name>substrate</name>
    </ligand>
</feature>
<feature type="binding site" evidence="2">
    <location>
        <position position="443"/>
    </location>
    <ligand>
        <name>substrate</name>
    </ligand>
</feature>
<feature type="binding site" evidence="2">
    <location>
        <position position="471"/>
    </location>
    <ligand>
        <name>substrate</name>
    </ligand>
</feature>
<feature type="binding site" evidence="2">
    <location>
        <position position="476"/>
    </location>
    <ligand>
        <name>substrate</name>
    </ligand>
</feature>
<feature type="binding site" evidence="2">
    <location>
        <position position="496"/>
    </location>
    <ligand>
        <name>substrate</name>
    </ligand>
</feature>
<feature type="site" description="Cis-peptide bond" evidence="2">
    <location>
        <begin position="184"/>
        <end position="185"/>
    </location>
</feature>
<feature type="glycosylation site" description="N-linked (GlcNAc...) asparagine" evidence="3">
    <location>
        <position position="240"/>
    </location>
</feature>
<feature type="disulfide bond" evidence="2">
    <location>
        <begin position="29"/>
        <end position="39"/>
    </location>
</feature>
<feature type="disulfide bond" evidence="2">
    <location>
        <begin position="89"/>
        <end position="94"/>
    </location>
</feature>
<feature type="disulfide bond" evidence="2">
    <location>
        <begin position="184"/>
        <end position="185"/>
    </location>
</feature>
<feature type="disulfide bond" evidence="2">
    <location>
        <begin position="409"/>
        <end position="447"/>
    </location>
</feature>
<dbReference type="EC" id="3.2.1.55"/>
<dbReference type="EMBL" id="AAHF01000006">
    <property type="protein sequence ID" value="EAL89298.1"/>
    <property type="molecule type" value="Genomic_DNA"/>
</dbReference>
<dbReference type="RefSeq" id="XP_751336.1">
    <property type="nucleotide sequence ID" value="XM_746243.1"/>
</dbReference>
<dbReference type="SMR" id="Q4WL66"/>
<dbReference type="STRING" id="330879.Q4WL66"/>
<dbReference type="GlyCosmos" id="Q4WL66">
    <property type="glycosylation" value="1 site, No reported glycans"/>
</dbReference>
<dbReference type="EnsemblFungi" id="EAL89298">
    <property type="protein sequence ID" value="EAL89298"/>
    <property type="gene ID" value="AFUA_6G14620"/>
</dbReference>
<dbReference type="GeneID" id="3508653"/>
<dbReference type="KEGG" id="afm:AFUA_6G14620"/>
<dbReference type="VEuPathDB" id="FungiDB:Afu6g14620"/>
<dbReference type="HOGENOM" id="CLU_029332_3_0_1"/>
<dbReference type="InParanoid" id="Q4WL66"/>
<dbReference type="OMA" id="WNYPTRY"/>
<dbReference type="OrthoDB" id="157622at2759"/>
<dbReference type="UniPathway" id="UPA00667"/>
<dbReference type="Proteomes" id="UP000002530">
    <property type="component" value="Chromosome 6"/>
</dbReference>
<dbReference type="GO" id="GO:0005576">
    <property type="term" value="C:extracellular region"/>
    <property type="evidence" value="ECO:0000250"/>
    <property type="project" value="UniProtKB"/>
</dbReference>
<dbReference type="GO" id="GO:0046556">
    <property type="term" value="F:alpha-L-arabinofuranosidase activity"/>
    <property type="evidence" value="ECO:0000250"/>
    <property type="project" value="UniProtKB"/>
</dbReference>
<dbReference type="GO" id="GO:0031222">
    <property type="term" value="P:arabinan catabolic process"/>
    <property type="evidence" value="ECO:0007669"/>
    <property type="project" value="UniProtKB-UniPathway"/>
</dbReference>
<dbReference type="GO" id="GO:0019566">
    <property type="term" value="P:arabinose metabolic process"/>
    <property type="evidence" value="ECO:0000250"/>
    <property type="project" value="UniProtKB"/>
</dbReference>
<dbReference type="GO" id="GO:0046373">
    <property type="term" value="P:L-arabinose metabolic process"/>
    <property type="evidence" value="ECO:0007669"/>
    <property type="project" value="InterPro"/>
</dbReference>
<dbReference type="GO" id="GO:0045490">
    <property type="term" value="P:pectin catabolic process"/>
    <property type="evidence" value="ECO:0000318"/>
    <property type="project" value="GO_Central"/>
</dbReference>
<dbReference type="GO" id="GO:0045493">
    <property type="term" value="P:xylan catabolic process"/>
    <property type="evidence" value="ECO:0007669"/>
    <property type="project" value="UniProtKB-KW"/>
</dbReference>
<dbReference type="CDD" id="cd23399">
    <property type="entry name" value="beta-trefoil_ABD_ABFB"/>
    <property type="match status" value="1"/>
</dbReference>
<dbReference type="FunFam" id="2.60.120.200:FF:000131">
    <property type="entry name" value="Probable alpha-L-arabinofuranosidase B"/>
    <property type="match status" value="1"/>
</dbReference>
<dbReference type="FunFam" id="2.80.10.50:FF:000059">
    <property type="entry name" value="Probable alpha-L-arabinofuranosidase B"/>
    <property type="match status" value="1"/>
</dbReference>
<dbReference type="Gene3D" id="2.60.120.200">
    <property type="match status" value="1"/>
</dbReference>
<dbReference type="Gene3D" id="2.80.10.50">
    <property type="match status" value="1"/>
</dbReference>
<dbReference type="InterPro" id="IPR015289">
    <property type="entry name" value="A-L-arabinofuranosidase_B_cat"/>
</dbReference>
<dbReference type="InterPro" id="IPR038964">
    <property type="entry name" value="ABFB"/>
</dbReference>
<dbReference type="InterPro" id="IPR007934">
    <property type="entry name" value="AbfB_ABD"/>
</dbReference>
<dbReference type="InterPro" id="IPR036195">
    <property type="entry name" value="AbfB_ABD_sf"/>
</dbReference>
<dbReference type="InterPro" id="IPR013320">
    <property type="entry name" value="ConA-like_dom_sf"/>
</dbReference>
<dbReference type="PANTHER" id="PTHR39447">
    <property type="entry name" value="ALPHA-L-ARABINOFURANOSIDASE B"/>
    <property type="match status" value="1"/>
</dbReference>
<dbReference type="PANTHER" id="PTHR39447:SF2">
    <property type="entry name" value="ALPHA-L-ARABINOFURANOSIDASE B"/>
    <property type="match status" value="1"/>
</dbReference>
<dbReference type="Pfam" id="PF05270">
    <property type="entry name" value="AbfB"/>
    <property type="match status" value="1"/>
</dbReference>
<dbReference type="Pfam" id="PF09206">
    <property type="entry name" value="ArabFuran-catal"/>
    <property type="match status" value="1"/>
</dbReference>
<dbReference type="SUPFAM" id="SSF110221">
    <property type="entry name" value="AbfB domain"/>
    <property type="match status" value="1"/>
</dbReference>
<dbReference type="SUPFAM" id="SSF49899">
    <property type="entry name" value="Concanavalin A-like lectins/glucanases"/>
    <property type="match status" value="1"/>
</dbReference>
<protein>
    <recommendedName>
        <fullName>Probable alpha-L-arabinofuranosidase B</fullName>
        <shortName>ABF B</shortName>
        <shortName>Arabinosidase B</shortName>
        <ecNumber>3.2.1.55</ecNumber>
    </recommendedName>
</protein>
<sequence>MLPQLSIERASVFALGLIATGSLVVAGPCDIYSAGGTPCVAAHSTTRALYSSYSGPLYQVKRGSDGATADIAPLSAGGVANAAAQDSFCDGTTCLITIIYDQSGRGNHLTQAPPGGFSGPESNGYDNLASAIGAPVTLNGQKAYGVFISPGTGYRNNAASGTATGDAPEGMYAVLDGTHYNDACCFDYGNAETSSRDTGNGHMEAIYFGDNTIWGTGSGSGPWIMADLENGLFSGSSPDNNSGDPSISYRFLTAVVKGKQNQWAIRGANAASGSLSTFYNGARPSVSGYNPMSKEGAIILGIGGDNSNGAQGTFYEGVMTSGYPSDATENSVQANIVAAKYATASLTSGPKLTVGSSISLQATTPGYTTRYIAHSGSTVNTQVVSSSSSTTLKQQASWTVRTGLANSDCFSFESRDTPGSFLRHYNFVLQLSANDGTKQFHEDATFCPQAGLNGQGNSIRSWNYPTRYFRHYNNVLYAASNGGVHTFDATSSFNNDVSWVISTGFA</sequence>